<accession>B1M1W4</accession>
<evidence type="ECO:0000255" key="1">
    <source>
        <dbReference type="HAMAP-Rule" id="MF_00254"/>
    </source>
</evidence>
<gene>
    <name evidence="1" type="primary">glyQ</name>
    <name type="ordered locus">Mrad2831_1140</name>
</gene>
<keyword id="KW-0030">Aminoacyl-tRNA synthetase</keyword>
<keyword id="KW-0067">ATP-binding</keyword>
<keyword id="KW-0963">Cytoplasm</keyword>
<keyword id="KW-0436">Ligase</keyword>
<keyword id="KW-0547">Nucleotide-binding</keyword>
<keyword id="KW-0648">Protein biosynthesis</keyword>
<sequence>MSQKKSFQGLILTLQEFWAAQGCVILQPYDMEVGAGTFHPATTLRALGPKPWKAAYVQPSRRPKDGRYGENPNRLQHYYQFQVILKPNPPNLQELYLASLAAIGVDLKLHDIRFVEDDWESPTLGAWGLGWECWCDGMEVSQFTYFQQVAGFECAPVAGELTYGLERLAMYVQGVENVYDLDFNGAEGPDRITYGDVFLQAEQEYSRHNFEAADTAMLFRQFTDAEAACRSYLAAGAPDAEGARHRMAQPAYDQCIKASHVFNLLDARGVISVTERQSYILRVRELAKACGAAWLKTAAGGAP</sequence>
<feature type="chain" id="PRO_1000101207" description="Glycine--tRNA ligase alpha subunit">
    <location>
        <begin position="1"/>
        <end position="303"/>
    </location>
</feature>
<dbReference type="EC" id="6.1.1.14" evidence="1"/>
<dbReference type="EMBL" id="CP001001">
    <property type="protein sequence ID" value="ACB23149.1"/>
    <property type="molecule type" value="Genomic_DNA"/>
</dbReference>
<dbReference type="RefSeq" id="WP_012318139.1">
    <property type="nucleotide sequence ID" value="NC_010505.1"/>
</dbReference>
<dbReference type="SMR" id="B1M1W4"/>
<dbReference type="STRING" id="426355.Mrad2831_1140"/>
<dbReference type="GeneID" id="6137157"/>
<dbReference type="KEGG" id="mrd:Mrad2831_1140"/>
<dbReference type="eggNOG" id="COG0752">
    <property type="taxonomic scope" value="Bacteria"/>
</dbReference>
<dbReference type="HOGENOM" id="CLU_057066_1_0_5"/>
<dbReference type="OrthoDB" id="9802183at2"/>
<dbReference type="Proteomes" id="UP000006589">
    <property type="component" value="Chromosome"/>
</dbReference>
<dbReference type="GO" id="GO:0005829">
    <property type="term" value="C:cytosol"/>
    <property type="evidence" value="ECO:0007669"/>
    <property type="project" value="TreeGrafter"/>
</dbReference>
<dbReference type="GO" id="GO:0005524">
    <property type="term" value="F:ATP binding"/>
    <property type="evidence" value="ECO:0007669"/>
    <property type="project" value="UniProtKB-UniRule"/>
</dbReference>
<dbReference type="GO" id="GO:0004820">
    <property type="term" value="F:glycine-tRNA ligase activity"/>
    <property type="evidence" value="ECO:0007669"/>
    <property type="project" value="UniProtKB-UniRule"/>
</dbReference>
<dbReference type="GO" id="GO:0006426">
    <property type="term" value="P:glycyl-tRNA aminoacylation"/>
    <property type="evidence" value="ECO:0007669"/>
    <property type="project" value="UniProtKB-UniRule"/>
</dbReference>
<dbReference type="CDD" id="cd00733">
    <property type="entry name" value="GlyRS_alpha_core"/>
    <property type="match status" value="1"/>
</dbReference>
<dbReference type="FunFam" id="3.30.930.10:FF:000006">
    <property type="entry name" value="Glycine--tRNA ligase alpha subunit"/>
    <property type="match status" value="1"/>
</dbReference>
<dbReference type="Gene3D" id="3.30.930.10">
    <property type="entry name" value="Bira Bifunctional Protein, Domain 2"/>
    <property type="match status" value="1"/>
</dbReference>
<dbReference type="Gene3D" id="1.20.58.180">
    <property type="entry name" value="Class II aaRS and biotin synthetases, domain 2"/>
    <property type="match status" value="1"/>
</dbReference>
<dbReference type="HAMAP" id="MF_00254">
    <property type="entry name" value="Gly_tRNA_synth_alpha"/>
    <property type="match status" value="1"/>
</dbReference>
<dbReference type="InterPro" id="IPR045864">
    <property type="entry name" value="aa-tRNA-synth_II/BPL/LPL"/>
</dbReference>
<dbReference type="InterPro" id="IPR006194">
    <property type="entry name" value="Gly-tRNA-synth_heterodimer"/>
</dbReference>
<dbReference type="InterPro" id="IPR002310">
    <property type="entry name" value="Gly-tRNA_ligase_asu"/>
</dbReference>
<dbReference type="NCBIfam" id="TIGR00388">
    <property type="entry name" value="glyQ"/>
    <property type="match status" value="1"/>
</dbReference>
<dbReference type="NCBIfam" id="NF006827">
    <property type="entry name" value="PRK09348.1"/>
    <property type="match status" value="1"/>
</dbReference>
<dbReference type="PANTHER" id="PTHR30075:SF2">
    <property type="entry name" value="GLYCINE--TRNA LIGASE, CHLOROPLASTIC_MITOCHONDRIAL 2"/>
    <property type="match status" value="1"/>
</dbReference>
<dbReference type="PANTHER" id="PTHR30075">
    <property type="entry name" value="GLYCYL-TRNA SYNTHETASE"/>
    <property type="match status" value="1"/>
</dbReference>
<dbReference type="Pfam" id="PF02091">
    <property type="entry name" value="tRNA-synt_2e"/>
    <property type="match status" value="1"/>
</dbReference>
<dbReference type="PRINTS" id="PR01044">
    <property type="entry name" value="TRNASYNTHGA"/>
</dbReference>
<dbReference type="SUPFAM" id="SSF55681">
    <property type="entry name" value="Class II aaRS and biotin synthetases"/>
    <property type="match status" value="1"/>
</dbReference>
<dbReference type="PROSITE" id="PS50861">
    <property type="entry name" value="AA_TRNA_LIGASE_II_GLYAB"/>
    <property type="match status" value="1"/>
</dbReference>
<comment type="catalytic activity">
    <reaction evidence="1">
        <text>tRNA(Gly) + glycine + ATP = glycyl-tRNA(Gly) + AMP + diphosphate</text>
        <dbReference type="Rhea" id="RHEA:16013"/>
        <dbReference type="Rhea" id="RHEA-COMP:9664"/>
        <dbReference type="Rhea" id="RHEA-COMP:9683"/>
        <dbReference type="ChEBI" id="CHEBI:30616"/>
        <dbReference type="ChEBI" id="CHEBI:33019"/>
        <dbReference type="ChEBI" id="CHEBI:57305"/>
        <dbReference type="ChEBI" id="CHEBI:78442"/>
        <dbReference type="ChEBI" id="CHEBI:78522"/>
        <dbReference type="ChEBI" id="CHEBI:456215"/>
        <dbReference type="EC" id="6.1.1.14"/>
    </reaction>
</comment>
<comment type="subunit">
    <text evidence="1">Tetramer of two alpha and two beta subunits.</text>
</comment>
<comment type="subcellular location">
    <subcellularLocation>
        <location evidence="1">Cytoplasm</location>
    </subcellularLocation>
</comment>
<comment type="similarity">
    <text evidence="1">Belongs to the class-II aminoacyl-tRNA synthetase family.</text>
</comment>
<proteinExistence type="inferred from homology"/>
<name>SYGA_METRJ</name>
<reference key="1">
    <citation type="submission" date="2008-03" db="EMBL/GenBank/DDBJ databases">
        <title>Complete sequence of chromosome of Methylobacterium radiotolerans JCM 2831.</title>
        <authorList>
            <consortium name="US DOE Joint Genome Institute"/>
            <person name="Copeland A."/>
            <person name="Lucas S."/>
            <person name="Lapidus A."/>
            <person name="Glavina del Rio T."/>
            <person name="Dalin E."/>
            <person name="Tice H."/>
            <person name="Bruce D."/>
            <person name="Goodwin L."/>
            <person name="Pitluck S."/>
            <person name="Kiss H."/>
            <person name="Brettin T."/>
            <person name="Detter J.C."/>
            <person name="Han C."/>
            <person name="Kuske C.R."/>
            <person name="Schmutz J."/>
            <person name="Larimer F."/>
            <person name="Land M."/>
            <person name="Hauser L."/>
            <person name="Kyrpides N."/>
            <person name="Mikhailova N."/>
            <person name="Marx C.J."/>
            <person name="Richardson P."/>
        </authorList>
    </citation>
    <scope>NUCLEOTIDE SEQUENCE [LARGE SCALE GENOMIC DNA]</scope>
    <source>
        <strain>ATCC 27329 / DSM 1819 / JCM 2831 / NBRC 15690 / NCIMB 10815 / 0-1</strain>
    </source>
</reference>
<organism>
    <name type="scientific">Methylobacterium radiotolerans (strain ATCC 27329 / DSM 1819 / JCM 2831 / NBRC 15690 / NCIMB 10815 / 0-1)</name>
    <dbReference type="NCBI Taxonomy" id="426355"/>
    <lineage>
        <taxon>Bacteria</taxon>
        <taxon>Pseudomonadati</taxon>
        <taxon>Pseudomonadota</taxon>
        <taxon>Alphaproteobacteria</taxon>
        <taxon>Hyphomicrobiales</taxon>
        <taxon>Methylobacteriaceae</taxon>
        <taxon>Methylobacterium</taxon>
    </lineage>
</organism>
<protein>
    <recommendedName>
        <fullName evidence="1">Glycine--tRNA ligase alpha subunit</fullName>
        <ecNumber evidence="1">6.1.1.14</ecNumber>
    </recommendedName>
    <alternativeName>
        <fullName evidence="1">Glycyl-tRNA synthetase alpha subunit</fullName>
        <shortName evidence="1">GlyRS</shortName>
    </alternativeName>
</protein>